<evidence type="ECO:0000255" key="1">
    <source>
        <dbReference type="HAMAP-Rule" id="MF_00008"/>
    </source>
</evidence>
<name>TYSY_METPP</name>
<protein>
    <recommendedName>
        <fullName evidence="1">Thymidylate synthase</fullName>
        <shortName evidence="1">TS</shortName>
        <shortName evidence="1">TSase</shortName>
        <ecNumber evidence="1">2.1.1.45</ecNumber>
    </recommendedName>
</protein>
<gene>
    <name evidence="1" type="primary">thyA</name>
    <name type="ordered locus">Mpe_A2051</name>
</gene>
<accession>A2SHH0</accession>
<feature type="chain" id="PRO_0000321471" description="Thymidylate synthase">
    <location>
        <begin position="1"/>
        <end position="283"/>
    </location>
</feature>
<feature type="active site" description="Nucleophile" evidence="1">
    <location>
        <position position="158"/>
    </location>
</feature>
<feature type="binding site" description="in other chain" evidence="1">
    <location>
        <position position="33"/>
    </location>
    <ligand>
        <name>dUMP</name>
        <dbReference type="ChEBI" id="CHEBI:246422"/>
        <note>ligand shared between dimeric partners</note>
    </ligand>
</feature>
<feature type="binding site" evidence="1">
    <location>
        <position position="63"/>
    </location>
    <ligand>
        <name>(6R)-5,10-methylene-5,6,7,8-tetrahydrofolate</name>
        <dbReference type="ChEBI" id="CHEBI:15636"/>
    </ligand>
</feature>
<feature type="binding site" evidence="1">
    <location>
        <begin position="138"/>
        <end position="139"/>
    </location>
    <ligand>
        <name>dUMP</name>
        <dbReference type="ChEBI" id="CHEBI:246422"/>
        <note>ligand shared between dimeric partners</note>
    </ligand>
</feature>
<feature type="binding site" description="in other chain" evidence="1">
    <location>
        <begin position="185"/>
        <end position="188"/>
    </location>
    <ligand>
        <name>dUMP</name>
        <dbReference type="ChEBI" id="CHEBI:246422"/>
        <note>ligand shared between dimeric partners</note>
    </ligand>
</feature>
<feature type="binding site" evidence="1">
    <location>
        <position position="188"/>
    </location>
    <ligand>
        <name>(6R)-5,10-methylene-5,6,7,8-tetrahydrofolate</name>
        <dbReference type="ChEBI" id="CHEBI:15636"/>
    </ligand>
</feature>
<feature type="binding site" description="in other chain" evidence="1">
    <location>
        <position position="196"/>
    </location>
    <ligand>
        <name>dUMP</name>
        <dbReference type="ChEBI" id="CHEBI:246422"/>
        <note>ligand shared between dimeric partners</note>
    </ligand>
</feature>
<feature type="binding site" description="in other chain" evidence="1">
    <location>
        <begin position="226"/>
        <end position="228"/>
    </location>
    <ligand>
        <name>dUMP</name>
        <dbReference type="ChEBI" id="CHEBI:246422"/>
        <note>ligand shared between dimeric partners</note>
    </ligand>
</feature>
<feature type="binding site" evidence="1">
    <location>
        <position position="282"/>
    </location>
    <ligand>
        <name>(6R)-5,10-methylene-5,6,7,8-tetrahydrofolate</name>
        <dbReference type="ChEBI" id="CHEBI:15636"/>
    </ligand>
</feature>
<comment type="function">
    <text evidence="1">Catalyzes the reductive methylation of 2'-deoxyuridine-5'-monophosphate (dUMP) to 2'-deoxythymidine-5'-monophosphate (dTMP) while utilizing 5,10-methylenetetrahydrofolate (mTHF) as the methyl donor and reductant in the reaction, yielding dihydrofolate (DHF) as a by-product. This enzymatic reaction provides an intracellular de novo source of dTMP, an essential precursor for DNA biosynthesis.</text>
</comment>
<comment type="catalytic activity">
    <reaction evidence="1">
        <text>dUMP + (6R)-5,10-methylene-5,6,7,8-tetrahydrofolate = 7,8-dihydrofolate + dTMP</text>
        <dbReference type="Rhea" id="RHEA:12104"/>
        <dbReference type="ChEBI" id="CHEBI:15636"/>
        <dbReference type="ChEBI" id="CHEBI:57451"/>
        <dbReference type="ChEBI" id="CHEBI:63528"/>
        <dbReference type="ChEBI" id="CHEBI:246422"/>
        <dbReference type="EC" id="2.1.1.45"/>
    </reaction>
</comment>
<comment type="pathway">
    <text evidence="1">Pyrimidine metabolism; dTTP biosynthesis.</text>
</comment>
<comment type="subunit">
    <text evidence="1">Homodimer.</text>
</comment>
<comment type="subcellular location">
    <subcellularLocation>
        <location evidence="1">Cytoplasm</location>
    </subcellularLocation>
</comment>
<comment type="similarity">
    <text evidence="1">Belongs to the thymidylate synthase family. Bacterial-type ThyA subfamily.</text>
</comment>
<dbReference type="EC" id="2.1.1.45" evidence="1"/>
<dbReference type="EMBL" id="CP000555">
    <property type="protein sequence ID" value="ABM95009.1"/>
    <property type="molecule type" value="Genomic_DNA"/>
</dbReference>
<dbReference type="RefSeq" id="WP_011829646.1">
    <property type="nucleotide sequence ID" value="NC_008825.1"/>
</dbReference>
<dbReference type="SMR" id="A2SHH0"/>
<dbReference type="STRING" id="420662.Mpe_A2051"/>
<dbReference type="KEGG" id="mpt:Mpe_A2051"/>
<dbReference type="eggNOG" id="COG0207">
    <property type="taxonomic scope" value="Bacteria"/>
</dbReference>
<dbReference type="HOGENOM" id="CLU_021669_0_0_4"/>
<dbReference type="UniPathway" id="UPA00575"/>
<dbReference type="Proteomes" id="UP000000366">
    <property type="component" value="Chromosome"/>
</dbReference>
<dbReference type="GO" id="GO:0005829">
    <property type="term" value="C:cytosol"/>
    <property type="evidence" value="ECO:0007669"/>
    <property type="project" value="TreeGrafter"/>
</dbReference>
<dbReference type="GO" id="GO:0004799">
    <property type="term" value="F:thymidylate synthase activity"/>
    <property type="evidence" value="ECO:0007669"/>
    <property type="project" value="UniProtKB-UniRule"/>
</dbReference>
<dbReference type="GO" id="GO:0006231">
    <property type="term" value="P:dTMP biosynthetic process"/>
    <property type="evidence" value="ECO:0007669"/>
    <property type="project" value="UniProtKB-UniRule"/>
</dbReference>
<dbReference type="GO" id="GO:0006235">
    <property type="term" value="P:dTTP biosynthetic process"/>
    <property type="evidence" value="ECO:0007669"/>
    <property type="project" value="UniProtKB-UniRule"/>
</dbReference>
<dbReference type="GO" id="GO:0032259">
    <property type="term" value="P:methylation"/>
    <property type="evidence" value="ECO:0007669"/>
    <property type="project" value="UniProtKB-KW"/>
</dbReference>
<dbReference type="CDD" id="cd00351">
    <property type="entry name" value="TS_Pyrimidine_HMase"/>
    <property type="match status" value="1"/>
</dbReference>
<dbReference type="FunFam" id="3.30.572.10:FF:000001">
    <property type="entry name" value="Thymidylate synthase"/>
    <property type="match status" value="1"/>
</dbReference>
<dbReference type="Gene3D" id="3.30.572.10">
    <property type="entry name" value="Thymidylate synthase/dCMP hydroxymethylase domain"/>
    <property type="match status" value="1"/>
</dbReference>
<dbReference type="HAMAP" id="MF_00008">
    <property type="entry name" value="Thymidy_synth_bact"/>
    <property type="match status" value="1"/>
</dbReference>
<dbReference type="InterPro" id="IPR045097">
    <property type="entry name" value="Thymidate_synth/dCMP_Mease"/>
</dbReference>
<dbReference type="InterPro" id="IPR023451">
    <property type="entry name" value="Thymidate_synth/dCMP_Mease_dom"/>
</dbReference>
<dbReference type="InterPro" id="IPR036926">
    <property type="entry name" value="Thymidate_synth/dCMP_Mease_sf"/>
</dbReference>
<dbReference type="InterPro" id="IPR000398">
    <property type="entry name" value="Thymidylate_synthase"/>
</dbReference>
<dbReference type="InterPro" id="IPR020940">
    <property type="entry name" value="Thymidylate_synthase_AS"/>
</dbReference>
<dbReference type="NCBIfam" id="NF002497">
    <property type="entry name" value="PRK01827.1-3"/>
    <property type="match status" value="1"/>
</dbReference>
<dbReference type="NCBIfam" id="NF002499">
    <property type="entry name" value="PRK01827.1-5"/>
    <property type="match status" value="1"/>
</dbReference>
<dbReference type="NCBIfam" id="TIGR03284">
    <property type="entry name" value="thym_sym"/>
    <property type="match status" value="2"/>
</dbReference>
<dbReference type="PANTHER" id="PTHR11548">
    <property type="entry name" value="THYMIDYLATE SYNTHASE 1"/>
    <property type="match status" value="1"/>
</dbReference>
<dbReference type="PANTHER" id="PTHR11548:SF1">
    <property type="entry name" value="THYMIDYLATE SYNTHASE 1"/>
    <property type="match status" value="1"/>
</dbReference>
<dbReference type="Pfam" id="PF00303">
    <property type="entry name" value="Thymidylat_synt"/>
    <property type="match status" value="1"/>
</dbReference>
<dbReference type="PRINTS" id="PR00108">
    <property type="entry name" value="THYMDSNTHASE"/>
</dbReference>
<dbReference type="SUPFAM" id="SSF55831">
    <property type="entry name" value="Thymidylate synthase/dCMP hydroxymethylase"/>
    <property type="match status" value="1"/>
</dbReference>
<dbReference type="PROSITE" id="PS00091">
    <property type="entry name" value="THYMIDYLATE_SYNTHASE"/>
    <property type="match status" value="1"/>
</dbReference>
<proteinExistence type="inferred from homology"/>
<keyword id="KW-0963">Cytoplasm</keyword>
<keyword id="KW-0489">Methyltransferase</keyword>
<keyword id="KW-0545">Nucleotide biosynthesis</keyword>
<keyword id="KW-1185">Reference proteome</keyword>
<keyword id="KW-0808">Transferase</keyword>
<sequence length="283" mass="31957">MSALPSPSPRPARSQYEDFLRHVRDHGVVKADRTGTGTTSVFGHQMRFDLREGFPLVTTKKVHLKSIVLELLWFLRGDGNATWLQERGVTIWDEWAAPDGDLGPVYGVQWRSWPTPDGGHVDQIAEVVKQLKTNPDSRRIIVSAWNVADLPKMALMPCHAFFQFYVAPGDSPSARGRLSCQLYQRSADIFLGVPFNIASYALLTHMLAQQCDLEVGDFVWTGGDCHIYSNHREQVELQLSRAPRPYPTLQIKRRPPSIFDYAYEDFEIIGYDPHPAIKAPVAV</sequence>
<reference key="1">
    <citation type="journal article" date="2007" name="J. Bacteriol.">
        <title>Whole-genome analysis of the methyl tert-butyl ether-degrading beta-proteobacterium Methylibium petroleiphilum PM1.</title>
        <authorList>
            <person name="Kane S.R."/>
            <person name="Chakicherla A.Y."/>
            <person name="Chain P.S.G."/>
            <person name="Schmidt R."/>
            <person name="Shin M.W."/>
            <person name="Legler T.C."/>
            <person name="Scow K.M."/>
            <person name="Larimer F.W."/>
            <person name="Lucas S.M."/>
            <person name="Richardson P.M."/>
            <person name="Hristova K.R."/>
        </authorList>
    </citation>
    <scope>NUCLEOTIDE SEQUENCE [LARGE SCALE GENOMIC DNA]</scope>
    <source>
        <strain>ATCC BAA-1232 / LMG 22953 / PM1</strain>
    </source>
</reference>
<organism>
    <name type="scientific">Methylibium petroleiphilum (strain ATCC BAA-1232 / LMG 22953 / PM1)</name>
    <dbReference type="NCBI Taxonomy" id="420662"/>
    <lineage>
        <taxon>Bacteria</taxon>
        <taxon>Pseudomonadati</taxon>
        <taxon>Pseudomonadota</taxon>
        <taxon>Betaproteobacteria</taxon>
        <taxon>Burkholderiales</taxon>
        <taxon>Sphaerotilaceae</taxon>
        <taxon>Methylibium</taxon>
    </lineage>
</organism>